<feature type="chain" id="PRO_0000213393" description="GDP-fucose transporter, Golgi">
    <location>
        <begin position="1"/>
        <end position="337"/>
    </location>
</feature>
<feature type="transmembrane region" description="Helical" evidence="1">
    <location>
        <begin position="13"/>
        <end position="35"/>
    </location>
</feature>
<feature type="transmembrane region" description="Helical" evidence="1">
    <location>
        <begin position="45"/>
        <end position="67"/>
    </location>
</feature>
<feature type="transmembrane region" description="Helical" evidence="1">
    <location>
        <begin position="95"/>
        <end position="117"/>
    </location>
</feature>
<feature type="transmembrane region" description="Helical" evidence="1">
    <location>
        <begin position="121"/>
        <end position="140"/>
    </location>
</feature>
<feature type="transmembrane region" description="Helical" evidence="1">
    <location>
        <begin position="145"/>
        <end position="163"/>
    </location>
</feature>
<feature type="transmembrane region" description="Helical" evidence="1">
    <location>
        <begin position="173"/>
        <end position="192"/>
    </location>
</feature>
<feature type="transmembrane region" description="Helical" evidence="1">
    <location>
        <begin position="205"/>
        <end position="227"/>
    </location>
</feature>
<feature type="transmembrane region" description="Helical" evidence="1">
    <location>
        <begin position="242"/>
        <end position="264"/>
    </location>
</feature>
<feature type="mutagenesis site" description="In nac1; abolishes GDP-fucose transport into the Golgi lumen. Shows lack of both core alpha-1,3- and alpha-1,6-linked fucose residues on N-glycans. Reduces neural expression of the HRP epitope. Does not affect subcellular localization to the Golgi apparatus." evidence="4">
    <original>S</original>
    <variation>L</variation>
    <location>
        <position position="29"/>
    </location>
</feature>
<sequence>MYKNLEEHNRLVNKYLKIFFVVSLYWCTSILTVFVNKHLLSSDTVNLGAPLFMSWFQCVVSTVICFVASRLSRKYPSVFTFPEGNPLDIDTFRKILPLSVLYTLMIGANNLSLSYVTVAFYYIGRSLTTVFSVVLTYVILRQRTSFKCLLCCGAIVVGFWLGVDQESLTEVFSWRGTIFGVLSSLALAMFSIQTKKSLGYVNQEVWLLSYYNNLYSTLLFLPLIIINGELESIITYPHLWASWFWAAMTLSGLCGFAIGFVTALEIKVTSALTHNISGTAKACAQTVIATQYYHDVRSALWWTSNVVVLVASAAYTRVKQLEMMRQHQQRSTATQKA</sequence>
<keyword id="KW-0333">Golgi apparatus</keyword>
<keyword id="KW-0472">Membrane</keyword>
<keyword id="KW-1185">Reference proteome</keyword>
<keyword id="KW-0762">Sugar transport</keyword>
<keyword id="KW-0812">Transmembrane</keyword>
<keyword id="KW-1133">Transmembrane helix</keyword>
<keyword id="KW-0813">Transport</keyword>
<organism evidence="7">
    <name type="scientific">Drosophila melanogaster</name>
    <name type="common">Fruit fly</name>
    <dbReference type="NCBI Taxonomy" id="7227"/>
    <lineage>
        <taxon>Eukaryota</taxon>
        <taxon>Metazoa</taxon>
        <taxon>Ecdysozoa</taxon>
        <taxon>Arthropoda</taxon>
        <taxon>Hexapoda</taxon>
        <taxon>Insecta</taxon>
        <taxon>Pterygota</taxon>
        <taxon>Neoptera</taxon>
        <taxon>Endopterygota</taxon>
        <taxon>Diptera</taxon>
        <taxon>Brachycera</taxon>
        <taxon>Muscomorpha</taxon>
        <taxon>Ephydroidea</taxon>
        <taxon>Drosophilidae</taxon>
        <taxon>Drosophila</taxon>
        <taxon>Sophophora</taxon>
    </lineage>
</organism>
<reference key="1">
    <citation type="journal article" date="2000" name="Science">
        <title>The genome sequence of Drosophila melanogaster.</title>
        <authorList>
            <person name="Adams M.D."/>
            <person name="Celniker S.E."/>
            <person name="Holt R.A."/>
            <person name="Evans C.A."/>
            <person name="Gocayne J.D."/>
            <person name="Amanatides P.G."/>
            <person name="Scherer S.E."/>
            <person name="Li P.W."/>
            <person name="Hoskins R.A."/>
            <person name="Galle R.F."/>
            <person name="George R.A."/>
            <person name="Lewis S.E."/>
            <person name="Richards S."/>
            <person name="Ashburner M."/>
            <person name="Henderson S.N."/>
            <person name="Sutton G.G."/>
            <person name="Wortman J.R."/>
            <person name="Yandell M.D."/>
            <person name="Zhang Q."/>
            <person name="Chen L.X."/>
            <person name="Brandon R.C."/>
            <person name="Rogers Y.-H.C."/>
            <person name="Blazej R.G."/>
            <person name="Champe M."/>
            <person name="Pfeiffer B.D."/>
            <person name="Wan K.H."/>
            <person name="Doyle C."/>
            <person name="Baxter E.G."/>
            <person name="Helt G."/>
            <person name="Nelson C.R."/>
            <person name="Miklos G.L.G."/>
            <person name="Abril J.F."/>
            <person name="Agbayani A."/>
            <person name="An H.-J."/>
            <person name="Andrews-Pfannkoch C."/>
            <person name="Baldwin D."/>
            <person name="Ballew R.M."/>
            <person name="Basu A."/>
            <person name="Baxendale J."/>
            <person name="Bayraktaroglu L."/>
            <person name="Beasley E.M."/>
            <person name="Beeson K.Y."/>
            <person name="Benos P.V."/>
            <person name="Berman B.P."/>
            <person name="Bhandari D."/>
            <person name="Bolshakov S."/>
            <person name="Borkova D."/>
            <person name="Botchan M.R."/>
            <person name="Bouck J."/>
            <person name="Brokstein P."/>
            <person name="Brottier P."/>
            <person name="Burtis K.C."/>
            <person name="Busam D.A."/>
            <person name="Butler H."/>
            <person name="Cadieu E."/>
            <person name="Center A."/>
            <person name="Chandra I."/>
            <person name="Cherry J.M."/>
            <person name="Cawley S."/>
            <person name="Dahlke C."/>
            <person name="Davenport L.B."/>
            <person name="Davies P."/>
            <person name="de Pablos B."/>
            <person name="Delcher A."/>
            <person name="Deng Z."/>
            <person name="Mays A.D."/>
            <person name="Dew I."/>
            <person name="Dietz S.M."/>
            <person name="Dodson K."/>
            <person name="Doup L.E."/>
            <person name="Downes M."/>
            <person name="Dugan-Rocha S."/>
            <person name="Dunkov B.C."/>
            <person name="Dunn P."/>
            <person name="Durbin K.J."/>
            <person name="Evangelista C.C."/>
            <person name="Ferraz C."/>
            <person name="Ferriera S."/>
            <person name="Fleischmann W."/>
            <person name="Fosler C."/>
            <person name="Gabrielian A.E."/>
            <person name="Garg N.S."/>
            <person name="Gelbart W.M."/>
            <person name="Glasser K."/>
            <person name="Glodek A."/>
            <person name="Gong F."/>
            <person name="Gorrell J.H."/>
            <person name="Gu Z."/>
            <person name="Guan P."/>
            <person name="Harris M."/>
            <person name="Harris N.L."/>
            <person name="Harvey D.A."/>
            <person name="Heiman T.J."/>
            <person name="Hernandez J.R."/>
            <person name="Houck J."/>
            <person name="Hostin D."/>
            <person name="Houston K.A."/>
            <person name="Howland T.J."/>
            <person name="Wei M.-H."/>
            <person name="Ibegwam C."/>
            <person name="Jalali M."/>
            <person name="Kalush F."/>
            <person name="Karpen G.H."/>
            <person name="Ke Z."/>
            <person name="Kennison J.A."/>
            <person name="Ketchum K.A."/>
            <person name="Kimmel B.E."/>
            <person name="Kodira C.D."/>
            <person name="Kraft C.L."/>
            <person name="Kravitz S."/>
            <person name="Kulp D."/>
            <person name="Lai Z."/>
            <person name="Lasko P."/>
            <person name="Lei Y."/>
            <person name="Levitsky A.A."/>
            <person name="Li J.H."/>
            <person name="Li Z."/>
            <person name="Liang Y."/>
            <person name="Lin X."/>
            <person name="Liu X."/>
            <person name="Mattei B."/>
            <person name="McIntosh T.C."/>
            <person name="McLeod M.P."/>
            <person name="McPherson D."/>
            <person name="Merkulov G."/>
            <person name="Milshina N.V."/>
            <person name="Mobarry C."/>
            <person name="Morris J."/>
            <person name="Moshrefi A."/>
            <person name="Mount S.M."/>
            <person name="Moy M."/>
            <person name="Murphy B."/>
            <person name="Murphy L."/>
            <person name="Muzny D.M."/>
            <person name="Nelson D.L."/>
            <person name="Nelson D.R."/>
            <person name="Nelson K.A."/>
            <person name="Nixon K."/>
            <person name="Nusskern D.R."/>
            <person name="Pacleb J.M."/>
            <person name="Palazzolo M."/>
            <person name="Pittman G.S."/>
            <person name="Pan S."/>
            <person name="Pollard J."/>
            <person name="Puri V."/>
            <person name="Reese M.G."/>
            <person name="Reinert K."/>
            <person name="Remington K."/>
            <person name="Saunders R.D.C."/>
            <person name="Scheeler F."/>
            <person name="Shen H."/>
            <person name="Shue B.C."/>
            <person name="Siden-Kiamos I."/>
            <person name="Simpson M."/>
            <person name="Skupski M.P."/>
            <person name="Smith T.J."/>
            <person name="Spier E."/>
            <person name="Spradling A.C."/>
            <person name="Stapleton M."/>
            <person name="Strong R."/>
            <person name="Sun E."/>
            <person name="Svirskas R."/>
            <person name="Tector C."/>
            <person name="Turner R."/>
            <person name="Venter E."/>
            <person name="Wang A.H."/>
            <person name="Wang X."/>
            <person name="Wang Z.-Y."/>
            <person name="Wassarman D.A."/>
            <person name="Weinstock G.M."/>
            <person name="Weissenbach J."/>
            <person name="Williams S.M."/>
            <person name="Woodage T."/>
            <person name="Worley K.C."/>
            <person name="Wu D."/>
            <person name="Yang S."/>
            <person name="Yao Q.A."/>
            <person name="Ye J."/>
            <person name="Yeh R.-F."/>
            <person name="Zaveri J.S."/>
            <person name="Zhan M."/>
            <person name="Zhang G."/>
            <person name="Zhao Q."/>
            <person name="Zheng L."/>
            <person name="Zheng X.H."/>
            <person name="Zhong F.N."/>
            <person name="Zhong W."/>
            <person name="Zhou X."/>
            <person name="Zhu S.C."/>
            <person name="Zhu X."/>
            <person name="Smith H.O."/>
            <person name="Gibbs R.A."/>
            <person name="Myers E.W."/>
            <person name="Rubin G.M."/>
            <person name="Venter J.C."/>
        </authorList>
    </citation>
    <scope>NUCLEOTIDE SEQUENCE [LARGE SCALE GENOMIC DNA]</scope>
    <source>
        <strain>Berkeley</strain>
    </source>
</reference>
<reference key="2">
    <citation type="journal article" date="2002" name="Genome Biol.">
        <title>Annotation of the Drosophila melanogaster euchromatic genome: a systematic review.</title>
        <authorList>
            <person name="Misra S."/>
            <person name="Crosby M.A."/>
            <person name="Mungall C.J."/>
            <person name="Matthews B.B."/>
            <person name="Campbell K.S."/>
            <person name="Hradecky P."/>
            <person name="Huang Y."/>
            <person name="Kaminker J.S."/>
            <person name="Millburn G.H."/>
            <person name="Prochnik S.E."/>
            <person name="Smith C.D."/>
            <person name="Tupy J.L."/>
            <person name="Whitfield E.J."/>
            <person name="Bayraktaroglu L."/>
            <person name="Berman B.P."/>
            <person name="Bettencourt B.R."/>
            <person name="Celniker S.E."/>
            <person name="de Grey A.D.N.J."/>
            <person name="Drysdale R.A."/>
            <person name="Harris N.L."/>
            <person name="Richter J."/>
            <person name="Russo S."/>
            <person name="Schroeder A.J."/>
            <person name="Shu S.Q."/>
            <person name="Stapleton M."/>
            <person name="Yamada C."/>
            <person name="Ashburner M."/>
            <person name="Gelbart W.M."/>
            <person name="Rubin G.M."/>
            <person name="Lewis S.E."/>
        </authorList>
    </citation>
    <scope>GENOME REANNOTATION</scope>
    <source>
        <strain>Berkeley</strain>
    </source>
</reference>
<reference key="3">
    <citation type="submission" date="2003-02" db="EMBL/GenBank/DDBJ databases">
        <authorList>
            <person name="Stapleton M."/>
            <person name="Brokstein P."/>
            <person name="Hong L."/>
            <person name="Agbayani A."/>
            <person name="Carlson J.W."/>
            <person name="Champe M."/>
            <person name="Chavez C."/>
            <person name="Dorsett V."/>
            <person name="Dresnek D."/>
            <person name="Farfan D."/>
            <person name="Frise E."/>
            <person name="George R.A."/>
            <person name="Gonzalez M."/>
            <person name="Guarin H."/>
            <person name="Kronmiller B."/>
            <person name="Li P.W."/>
            <person name="Liao G."/>
            <person name="Miranda A."/>
            <person name="Mungall C.J."/>
            <person name="Nunoo J."/>
            <person name="Pacleb J.M."/>
            <person name="Paragas V."/>
            <person name="Park S."/>
            <person name="Patel S."/>
            <person name="Phouanenavong S."/>
            <person name="Wan K.H."/>
            <person name="Yu C."/>
            <person name="Lewis S.E."/>
            <person name="Rubin G.M."/>
            <person name="Celniker S.E."/>
        </authorList>
    </citation>
    <scope>NUCLEOTIDE SEQUENCE [LARGE SCALE MRNA]</scope>
    <source>
        <strain>Berkeley</strain>
        <tissue>Embryo</tissue>
    </source>
</reference>
<reference key="4">
    <citation type="journal article" date="2004" name="Exp. Cell Res.">
        <title>Identification and molecular cloning of a functional GDP-fucose transporter in Drosophila melanogaster.</title>
        <authorList>
            <person name="Luehn K."/>
            <person name="Laskowska A."/>
            <person name="Pielage J."/>
            <person name="Klaembt C."/>
            <person name="Ipe U."/>
            <person name="Vestweber D."/>
            <person name="Wild M.K."/>
        </authorList>
    </citation>
    <scope>FUNCTION</scope>
    <scope>SUBCELLULAR LOCATION</scope>
</reference>
<reference key="5">
    <citation type="journal article" date="2010" name="J. Biol. Chem.">
        <title>Two pathways for importing GDP-fucose into the endoplasmic reticulum lumen function redundantly in the O-fucosylation of Notch in Drosophila.</title>
        <authorList>
            <person name="Ishikawa H.O."/>
            <person name="Ayukawa T."/>
            <person name="Nakayama M."/>
            <person name="Higashi S."/>
            <person name="Kamiyama S."/>
            <person name="Nishihara S."/>
            <person name="Aoki K."/>
            <person name="Ishida N."/>
            <person name="Sanai Y."/>
            <person name="Matsuno K."/>
        </authorList>
    </citation>
    <scope>FUNCTION</scope>
    <scope>SUBCELLULAR LOCATION</scope>
</reference>
<reference key="6">
    <citation type="journal article" date="2012" name="J. Biol. Chem.">
        <title>The Drosophila neurally altered carbohydrate mutant has a defective Golgi GDP-fucose transporter.</title>
        <authorList>
            <person name="Geisler C."/>
            <person name="Kotu V."/>
            <person name="Sharrow M."/>
            <person name="Rendic D."/>
            <person name="Poltl G."/>
            <person name="Tiemeyer M."/>
            <person name="Wilson I.B."/>
            <person name="Jarvis D.L."/>
        </authorList>
    </citation>
    <scope>FUNCTION</scope>
    <scope>SUBCELLULAR LOCATION</scope>
    <scope>MUTAGENESIS OF SER-29</scope>
</reference>
<proteinExistence type="evidence at protein level"/>
<gene>
    <name evidence="6" type="primary">Gfr</name>
    <name evidence="6" type="synonym">nac</name>
    <name evidence="6" type="ORF">CG9620</name>
</gene>
<evidence type="ECO:0000255" key="1"/>
<evidence type="ECO:0000269" key="2">
    <source>
    </source>
</evidence>
<evidence type="ECO:0000269" key="3">
    <source>
    </source>
</evidence>
<evidence type="ECO:0000269" key="4">
    <source>
    </source>
</evidence>
<evidence type="ECO:0000305" key="5"/>
<evidence type="ECO:0000312" key="6">
    <source>
        <dbReference type="FlyBase" id="FBgn0265351"/>
    </source>
</evidence>
<evidence type="ECO:0000312" key="7">
    <source>
        <dbReference type="Proteomes" id="UP000000803"/>
    </source>
</evidence>
<comment type="function">
    <text evidence="2 3 4">Involved in GDP-fucose import from the cytoplasm into the Golgi lumen (PubMed:15530860, PubMed:22745127). Plays a major role in the fucosylation of N-glycans (PubMed:15530860, PubMed:22745127). Functions redundantly with Efr in the O-fucosylation of Notch, positively regulating Notch signaling (PubMed:19948734).</text>
</comment>
<comment type="subcellular location">
    <subcellularLocation>
        <location evidence="2 3 4">Golgi apparatus membrane</location>
        <topology evidence="3 4">Multi-pass membrane protein</topology>
    </subcellularLocation>
</comment>
<comment type="similarity">
    <text evidence="5">Belongs to the TPT transporter family. SLC35C subfamily.</text>
</comment>
<name>FUCT1_DROME</name>
<accession>Q9VHT4</accession>
<accession>Q53YF6</accession>
<protein>
    <recommendedName>
        <fullName evidence="6">GDP-fucose transporter, Golgi</fullName>
    </recommendedName>
    <alternativeName>
        <fullName evidence="6">Neuronally altered carbohydrate</fullName>
    </alternativeName>
    <alternativeName>
        <fullName>Solute carrier family 35 member C1 homolog</fullName>
    </alternativeName>
</protein>
<dbReference type="EMBL" id="AE014297">
    <property type="protein sequence ID" value="AAF54215.1"/>
    <property type="molecule type" value="Genomic_DNA"/>
</dbReference>
<dbReference type="EMBL" id="BT003501">
    <property type="protein sequence ID" value="AAO39505.1"/>
    <property type="molecule type" value="mRNA"/>
</dbReference>
<dbReference type="RefSeq" id="NP_649782.1">
    <property type="nucleotide sequence ID" value="NM_141525.2"/>
</dbReference>
<dbReference type="SMR" id="Q9VHT4"/>
<dbReference type="FunCoup" id="Q9VHT4">
    <property type="interactions" value="398"/>
</dbReference>
<dbReference type="STRING" id="7227.FBpp0081352"/>
<dbReference type="TCDB" id="2.A.7.16.2">
    <property type="family name" value="the drug/metabolite transporter (dmt) superfamily"/>
</dbReference>
<dbReference type="PaxDb" id="7227-FBpp0081352"/>
<dbReference type="DNASU" id="40981"/>
<dbReference type="EnsemblMetazoa" id="FBtr0081863">
    <property type="protein sequence ID" value="FBpp0081352"/>
    <property type="gene ID" value="FBgn0265351"/>
</dbReference>
<dbReference type="GeneID" id="40981"/>
<dbReference type="KEGG" id="dme:Dmel_CG9620"/>
<dbReference type="AGR" id="FB:FBgn0265351"/>
<dbReference type="CTD" id="40981"/>
<dbReference type="FlyBase" id="FBgn0265351">
    <property type="gene designation" value="Gfr"/>
</dbReference>
<dbReference type="VEuPathDB" id="VectorBase:FBgn0265351"/>
<dbReference type="eggNOG" id="KOG1442">
    <property type="taxonomic scope" value="Eukaryota"/>
</dbReference>
<dbReference type="GeneTree" id="ENSGT00390000013315"/>
<dbReference type="HOGENOM" id="CLU_044894_1_0_1"/>
<dbReference type="InParanoid" id="Q9VHT4"/>
<dbReference type="OMA" id="WWTSNIV"/>
<dbReference type="OrthoDB" id="5547497at2759"/>
<dbReference type="PhylomeDB" id="Q9VHT4"/>
<dbReference type="Reactome" id="R-DME-6787639">
    <property type="pathway name" value="GDP-fucose biosynthesis"/>
</dbReference>
<dbReference type="Reactome" id="R-DME-727802">
    <property type="pathway name" value="Transport of nucleotide sugars"/>
</dbReference>
<dbReference type="BioGRID-ORCS" id="40981">
    <property type="hits" value="0 hits in 1 CRISPR screen"/>
</dbReference>
<dbReference type="ChiTaRS" id="nac">
    <property type="organism name" value="fly"/>
</dbReference>
<dbReference type="GenomeRNAi" id="40981"/>
<dbReference type="PRO" id="PR:Q9VHT4"/>
<dbReference type="Proteomes" id="UP000000803">
    <property type="component" value="Chromosome 3R"/>
</dbReference>
<dbReference type="Bgee" id="FBgn0265351">
    <property type="expression patterns" value="Expressed in embryonic/larval hemocyte (Drosophila) and 42 other cell types or tissues"/>
</dbReference>
<dbReference type="GO" id="GO:0005794">
    <property type="term" value="C:Golgi apparatus"/>
    <property type="evidence" value="ECO:0000314"/>
    <property type="project" value="FlyBase"/>
</dbReference>
<dbReference type="GO" id="GO:0000139">
    <property type="term" value="C:Golgi membrane"/>
    <property type="evidence" value="ECO:0000314"/>
    <property type="project" value="FlyBase"/>
</dbReference>
<dbReference type="GO" id="GO:0005798">
    <property type="term" value="C:Golgi-associated vesicle"/>
    <property type="evidence" value="ECO:0000314"/>
    <property type="project" value="FlyBase"/>
</dbReference>
<dbReference type="GO" id="GO:0015297">
    <property type="term" value="F:antiporter activity"/>
    <property type="evidence" value="ECO:0000318"/>
    <property type="project" value="GO_Central"/>
</dbReference>
<dbReference type="GO" id="GO:0005457">
    <property type="term" value="F:GDP-fucose transmembrane transporter activity"/>
    <property type="evidence" value="ECO:0000314"/>
    <property type="project" value="FlyBase"/>
</dbReference>
<dbReference type="GO" id="GO:0036085">
    <property type="term" value="P:GDP-fucose import into Golgi lumen"/>
    <property type="evidence" value="ECO:0000314"/>
    <property type="project" value="FlyBase"/>
</dbReference>
<dbReference type="GO" id="GO:0015783">
    <property type="term" value="P:GDP-fucose transmembrane transport"/>
    <property type="evidence" value="ECO:0000314"/>
    <property type="project" value="FlyBase"/>
</dbReference>
<dbReference type="InterPro" id="IPR004853">
    <property type="entry name" value="Sugar_P_trans_dom"/>
</dbReference>
<dbReference type="InterPro" id="IPR050186">
    <property type="entry name" value="TPT_transporter"/>
</dbReference>
<dbReference type="PANTHER" id="PTHR11132">
    <property type="entry name" value="SOLUTE CARRIER FAMILY 35"/>
    <property type="match status" value="1"/>
</dbReference>
<dbReference type="Pfam" id="PF03151">
    <property type="entry name" value="TPT"/>
    <property type="match status" value="1"/>
</dbReference>
<dbReference type="SUPFAM" id="SSF103481">
    <property type="entry name" value="Multidrug resistance efflux transporter EmrE"/>
    <property type="match status" value="1"/>
</dbReference>